<feature type="signal peptide" evidence="3">
    <location>
        <begin position="1"/>
        <end position="17"/>
    </location>
</feature>
<feature type="chain" id="PRO_0000013191" description="Hyaluronan and proteoglycan link protein 3" evidence="3">
    <location>
        <begin position="18"/>
        <end position="359"/>
    </location>
</feature>
<feature type="domain" description="Ig-like V-type" evidence="6">
    <location>
        <begin position="48"/>
        <end position="164"/>
    </location>
</feature>
<feature type="domain" description="Link 1" evidence="4 6">
    <location>
        <begin position="166"/>
        <end position="261"/>
    </location>
</feature>
<feature type="domain" description="Link 2" evidence="4 6">
    <location>
        <begin position="266"/>
        <end position="357"/>
    </location>
</feature>
<feature type="disulfide bond" evidence="2">
    <location>
        <begin position="70"/>
        <end position="146"/>
    </location>
</feature>
<feature type="disulfide bond" evidence="2">
    <location>
        <begin position="188"/>
        <end position="259"/>
    </location>
</feature>
<feature type="disulfide bond" evidence="2">
    <location>
        <begin position="212"/>
        <end position="233"/>
    </location>
</feature>
<feature type="disulfide bond" evidence="2">
    <location>
        <begin position="286"/>
        <end position="355"/>
    </location>
</feature>
<feature type="disulfide bond" evidence="2">
    <location>
        <begin position="311"/>
        <end position="332"/>
    </location>
</feature>
<feature type="sequence conflict" description="In Ref. 2; AAP12624." evidence="6" ref="2">
    <original>F</original>
    <variation>L</variation>
    <location>
        <position position="12"/>
    </location>
</feature>
<feature type="sequence conflict" description="In Ref. 2; AAP12624." evidence="6" ref="2">
    <original>DLS</original>
    <variation>GLR</variation>
    <location>
        <begin position="29"/>
        <end position="31"/>
    </location>
</feature>
<proteinExistence type="evidence at transcript level"/>
<name>HPLN3_MOUSE</name>
<sequence length="359" mass="40740">MSLLFLVLLSPFPCVLGLPFYNGFYYSNDLSGRTLGNGYGEGLFNGVKLVVETTEESLFSHQGASVTLPCHYHYEPALASPRHVRVKWWKLSENGAPEQDVLVVIGQRHRSFGDYQGRVQLRQDKQQEVSLELRDLRLEDSGRYRCEVIDGLEDESGLVELELRGVVFPYQSREGRYQLNFHEAQQACQEQGAMVATFEQLFRAWEEGLDWCNAGWLQDASVQYPIVLPRQPCGGLGLAPGVRSYGQRHHRLHRYDVFCFAAALKGRVYYLENPKKLTLLEAREACQEDGAQISTVGQLFAAWKFRGLDRCDAGWLADGSARYPIVHPRLNCGPPEPGVRTFGFPDPHTRYGVYCYVQH</sequence>
<comment type="function">
    <text evidence="5">May function in hyaluronic acid binding.</text>
</comment>
<comment type="subcellular location">
    <subcellularLocation>
        <location evidence="1">Secreted</location>
        <location evidence="1">Extracellular space</location>
        <location evidence="1">Extracellular matrix</location>
    </subcellularLocation>
</comment>
<comment type="similarity">
    <text evidence="6">Belongs to the HAPLN family.</text>
</comment>
<gene>
    <name type="primary">Hapln3</name>
    <name type="synonym">Lpr3</name>
</gene>
<evidence type="ECO:0000250" key="1"/>
<evidence type="ECO:0000250" key="2">
    <source>
        <dbReference type="UniProtKB" id="P03994"/>
    </source>
</evidence>
<evidence type="ECO:0000255" key="3"/>
<evidence type="ECO:0000255" key="4">
    <source>
        <dbReference type="PROSITE-ProRule" id="PRU00323"/>
    </source>
</evidence>
<evidence type="ECO:0000303" key="5">
    <source>
    </source>
</evidence>
<evidence type="ECO:0000305" key="6"/>
<evidence type="ECO:0000312" key="7">
    <source>
        <dbReference type="EMBL" id="AAP12624.1"/>
    </source>
</evidence>
<evidence type="ECO:0000312" key="8">
    <source>
        <dbReference type="EMBL" id="AAP22049.1"/>
    </source>
</evidence>
<protein>
    <recommendedName>
        <fullName>Hyaluronan and proteoglycan link protein 3</fullName>
    </recommendedName>
</protein>
<organism evidence="8">
    <name type="scientific">Mus musculus</name>
    <name type="common">Mouse</name>
    <dbReference type="NCBI Taxonomy" id="10090"/>
    <lineage>
        <taxon>Eukaryota</taxon>
        <taxon>Metazoa</taxon>
        <taxon>Chordata</taxon>
        <taxon>Craniata</taxon>
        <taxon>Vertebrata</taxon>
        <taxon>Euteleostomi</taxon>
        <taxon>Mammalia</taxon>
        <taxon>Eutheria</taxon>
        <taxon>Euarchontoglires</taxon>
        <taxon>Glires</taxon>
        <taxon>Rodentia</taxon>
        <taxon>Myomorpha</taxon>
        <taxon>Muroidea</taxon>
        <taxon>Muridae</taxon>
        <taxon>Murinae</taxon>
        <taxon>Mus</taxon>
        <taxon>Mus</taxon>
    </lineage>
</organism>
<dbReference type="EMBL" id="AY262757">
    <property type="protein sequence ID" value="AAP22049.1"/>
    <property type="molecule type" value="mRNA"/>
</dbReference>
<dbReference type="EMBL" id="AY269788">
    <property type="protein sequence ID" value="AAP12624.1"/>
    <property type="molecule type" value="mRNA"/>
</dbReference>
<dbReference type="EMBL" id="AK136956">
    <property type="protein sequence ID" value="BAE23187.1"/>
    <property type="molecule type" value="mRNA"/>
</dbReference>
<dbReference type="EMBL" id="CH466543">
    <property type="protein sequence ID" value="EDL07078.1"/>
    <property type="molecule type" value="Genomic_DNA"/>
</dbReference>
<dbReference type="CCDS" id="CCDS21378.1"/>
<dbReference type="RefSeq" id="NP_839986.2">
    <property type="nucleotide sequence ID" value="NM_178255.3"/>
</dbReference>
<dbReference type="RefSeq" id="XP_006541190.1">
    <property type="nucleotide sequence ID" value="XM_006541127.5"/>
</dbReference>
<dbReference type="RefSeq" id="XP_006541191.1">
    <property type="nucleotide sequence ID" value="XM_006541128.5"/>
</dbReference>
<dbReference type="RefSeq" id="XP_036009277.1">
    <property type="nucleotide sequence ID" value="XM_036153384.1"/>
</dbReference>
<dbReference type="SMR" id="Q80WM5"/>
<dbReference type="FunCoup" id="Q80WM5">
    <property type="interactions" value="68"/>
</dbReference>
<dbReference type="PhosphoSitePlus" id="Q80WM5"/>
<dbReference type="SwissPalm" id="Q80WM5"/>
<dbReference type="jPOST" id="Q80WM5"/>
<dbReference type="PaxDb" id="10090-ENSMUSP00000032827"/>
<dbReference type="ProteomicsDB" id="273271"/>
<dbReference type="Antibodypedia" id="28522">
    <property type="antibodies" value="110 antibodies from 21 providers"/>
</dbReference>
<dbReference type="DNASU" id="67666"/>
<dbReference type="Ensembl" id="ENSMUST00000206092.2">
    <property type="protein sequence ID" value="ENSMUSP00000146090.2"/>
    <property type="gene ID" value="ENSMUSG00000030606.9"/>
</dbReference>
<dbReference type="GeneID" id="67666"/>
<dbReference type="KEGG" id="mmu:67666"/>
<dbReference type="UCSC" id="uc009hxy.1">
    <property type="organism name" value="mouse"/>
</dbReference>
<dbReference type="AGR" id="MGI:1914916"/>
<dbReference type="CTD" id="145864"/>
<dbReference type="MGI" id="MGI:1914916">
    <property type="gene designation" value="Hapln3"/>
</dbReference>
<dbReference type="VEuPathDB" id="HostDB:ENSMUSG00000030606"/>
<dbReference type="eggNOG" id="ENOG502QWFF">
    <property type="taxonomic scope" value="Eukaryota"/>
</dbReference>
<dbReference type="GeneTree" id="ENSGT00940000159628"/>
<dbReference type="HOGENOM" id="CLU_052285_1_0_1"/>
<dbReference type="InParanoid" id="Q80WM5"/>
<dbReference type="OMA" id="AHPRPNC"/>
<dbReference type="OrthoDB" id="6431884at2759"/>
<dbReference type="PhylomeDB" id="Q80WM5"/>
<dbReference type="TreeFam" id="TF332134"/>
<dbReference type="BioGRID-ORCS" id="67666">
    <property type="hits" value="0 hits in 78 CRISPR screens"/>
</dbReference>
<dbReference type="CD-CODE" id="CE726F99">
    <property type="entry name" value="Postsynaptic density"/>
</dbReference>
<dbReference type="PRO" id="PR:Q80WM5"/>
<dbReference type="Proteomes" id="UP000000589">
    <property type="component" value="Chromosome 7"/>
</dbReference>
<dbReference type="RNAct" id="Q80WM5">
    <property type="molecule type" value="protein"/>
</dbReference>
<dbReference type="Bgee" id="ENSMUSG00000030606">
    <property type="expression patterns" value="Expressed in mesodermal cell in embryo and 61 other cell types or tissues"/>
</dbReference>
<dbReference type="ExpressionAtlas" id="Q80WM5">
    <property type="expression patterns" value="baseline and differential"/>
</dbReference>
<dbReference type="GO" id="GO:0031012">
    <property type="term" value="C:extracellular matrix"/>
    <property type="evidence" value="ECO:0007669"/>
    <property type="project" value="UniProtKB-ARBA"/>
</dbReference>
<dbReference type="GO" id="GO:0005576">
    <property type="term" value="C:extracellular region"/>
    <property type="evidence" value="ECO:0007669"/>
    <property type="project" value="UniProtKB-KW"/>
</dbReference>
<dbReference type="GO" id="GO:0005540">
    <property type="term" value="F:hyaluronic acid binding"/>
    <property type="evidence" value="ECO:0007669"/>
    <property type="project" value="UniProtKB-KW"/>
</dbReference>
<dbReference type="GO" id="GO:0007155">
    <property type="term" value="P:cell adhesion"/>
    <property type="evidence" value="ECO:0007669"/>
    <property type="project" value="InterPro"/>
</dbReference>
<dbReference type="CDD" id="cd05877">
    <property type="entry name" value="Ig_LP_like"/>
    <property type="match status" value="1"/>
</dbReference>
<dbReference type="CDD" id="cd03518">
    <property type="entry name" value="Link_domain_HAPLN_module_1"/>
    <property type="match status" value="1"/>
</dbReference>
<dbReference type="CDD" id="cd03519">
    <property type="entry name" value="Link_domain_HAPLN_module_2"/>
    <property type="match status" value="1"/>
</dbReference>
<dbReference type="FunFam" id="2.60.40.10:FF:000845">
    <property type="entry name" value="Hyaluronan and proteoglycan link protein 3"/>
    <property type="match status" value="1"/>
</dbReference>
<dbReference type="FunFam" id="3.10.100.10:FF:000001">
    <property type="entry name" value="Hyaluronan proteoglycan link protein 1"/>
    <property type="match status" value="1"/>
</dbReference>
<dbReference type="FunFam" id="3.10.100.10:FF:000002">
    <property type="entry name" value="Hyaluronan proteoglycan link protein 1"/>
    <property type="match status" value="1"/>
</dbReference>
<dbReference type="Gene3D" id="2.60.40.10">
    <property type="entry name" value="Immunoglobulins"/>
    <property type="match status" value="1"/>
</dbReference>
<dbReference type="Gene3D" id="3.10.100.10">
    <property type="entry name" value="Mannose-Binding Protein A, subunit A"/>
    <property type="match status" value="2"/>
</dbReference>
<dbReference type="InterPro" id="IPR016186">
    <property type="entry name" value="C-type_lectin-like/link_sf"/>
</dbReference>
<dbReference type="InterPro" id="IPR016187">
    <property type="entry name" value="CTDL_fold"/>
</dbReference>
<dbReference type="InterPro" id="IPR050691">
    <property type="entry name" value="Hyaluronan_bind_Proteoglycan"/>
</dbReference>
<dbReference type="InterPro" id="IPR007110">
    <property type="entry name" value="Ig-like_dom"/>
</dbReference>
<dbReference type="InterPro" id="IPR036179">
    <property type="entry name" value="Ig-like_dom_sf"/>
</dbReference>
<dbReference type="InterPro" id="IPR013783">
    <property type="entry name" value="Ig-like_fold"/>
</dbReference>
<dbReference type="InterPro" id="IPR003599">
    <property type="entry name" value="Ig_sub"/>
</dbReference>
<dbReference type="InterPro" id="IPR013106">
    <property type="entry name" value="Ig_V-set"/>
</dbReference>
<dbReference type="InterPro" id="IPR000538">
    <property type="entry name" value="Link_dom"/>
</dbReference>
<dbReference type="PANTHER" id="PTHR22804">
    <property type="entry name" value="AGGRECAN/VERSICAN PROTEOGLYCAN"/>
    <property type="match status" value="1"/>
</dbReference>
<dbReference type="PANTHER" id="PTHR22804:SF40">
    <property type="entry name" value="HYALURONAN AND PROTEOGLYCAN LINK PROTEIN 3"/>
    <property type="match status" value="1"/>
</dbReference>
<dbReference type="Pfam" id="PF07686">
    <property type="entry name" value="V-set"/>
    <property type="match status" value="1"/>
</dbReference>
<dbReference type="Pfam" id="PF00193">
    <property type="entry name" value="Xlink"/>
    <property type="match status" value="2"/>
</dbReference>
<dbReference type="PRINTS" id="PR01265">
    <property type="entry name" value="LINKMODULE"/>
</dbReference>
<dbReference type="SMART" id="SM00409">
    <property type="entry name" value="IG"/>
    <property type="match status" value="1"/>
</dbReference>
<dbReference type="SMART" id="SM00406">
    <property type="entry name" value="IGv"/>
    <property type="match status" value="1"/>
</dbReference>
<dbReference type="SMART" id="SM00445">
    <property type="entry name" value="LINK"/>
    <property type="match status" value="2"/>
</dbReference>
<dbReference type="SUPFAM" id="SSF56436">
    <property type="entry name" value="C-type lectin-like"/>
    <property type="match status" value="2"/>
</dbReference>
<dbReference type="SUPFAM" id="SSF48726">
    <property type="entry name" value="Immunoglobulin"/>
    <property type="match status" value="1"/>
</dbReference>
<dbReference type="PROSITE" id="PS50835">
    <property type="entry name" value="IG_LIKE"/>
    <property type="match status" value="1"/>
</dbReference>
<dbReference type="PROSITE" id="PS01241">
    <property type="entry name" value="LINK_1"/>
    <property type="match status" value="2"/>
</dbReference>
<dbReference type="PROSITE" id="PS50963">
    <property type="entry name" value="LINK_2"/>
    <property type="match status" value="2"/>
</dbReference>
<reference evidence="6" key="1">
    <citation type="journal article" date="2003" name="J. Biol. Chem.">
        <title>A hyaluronan binding link protein gene family whose members are physically linked adjacent to chondroitin sulfate proteoglycan core protein genes: the missing links.</title>
        <authorList>
            <person name="Spicer A.P."/>
            <person name="Joo A."/>
            <person name="Bowling R.A. Jr."/>
        </authorList>
    </citation>
    <scope>NUCLEOTIDE SEQUENCE [MRNA]</scope>
    <source>
        <strain evidence="8">C57BL/6J</strain>
    </source>
</reference>
<reference evidence="7" key="2">
    <citation type="submission" date="2003-04" db="EMBL/GenBank/DDBJ databases">
        <title>Discoordinate expression of link proteins and skeletal tissue proteoglycans (aggrecan and versican) in different organs from early embryonic to adult age of mice.</title>
        <authorList>
            <person name="Czipri M."/>
            <person name="Nesterovitch A.B."/>
            <person name="Glant T.T."/>
        </authorList>
    </citation>
    <scope>NUCLEOTIDE SEQUENCE [MRNA]</scope>
    <source>
        <strain evidence="7">BALB/cJ</strain>
        <tissue evidence="7">Brain</tissue>
    </source>
</reference>
<reference key="3">
    <citation type="journal article" date="2005" name="Science">
        <title>The transcriptional landscape of the mammalian genome.</title>
        <authorList>
            <person name="Carninci P."/>
            <person name="Kasukawa T."/>
            <person name="Katayama S."/>
            <person name="Gough J."/>
            <person name="Frith M.C."/>
            <person name="Maeda N."/>
            <person name="Oyama R."/>
            <person name="Ravasi T."/>
            <person name="Lenhard B."/>
            <person name="Wells C."/>
            <person name="Kodzius R."/>
            <person name="Shimokawa K."/>
            <person name="Bajic V.B."/>
            <person name="Brenner S.E."/>
            <person name="Batalov S."/>
            <person name="Forrest A.R."/>
            <person name="Zavolan M."/>
            <person name="Davis M.J."/>
            <person name="Wilming L.G."/>
            <person name="Aidinis V."/>
            <person name="Allen J.E."/>
            <person name="Ambesi-Impiombato A."/>
            <person name="Apweiler R."/>
            <person name="Aturaliya R.N."/>
            <person name="Bailey T.L."/>
            <person name="Bansal M."/>
            <person name="Baxter L."/>
            <person name="Beisel K.W."/>
            <person name="Bersano T."/>
            <person name="Bono H."/>
            <person name="Chalk A.M."/>
            <person name="Chiu K.P."/>
            <person name="Choudhary V."/>
            <person name="Christoffels A."/>
            <person name="Clutterbuck D.R."/>
            <person name="Crowe M.L."/>
            <person name="Dalla E."/>
            <person name="Dalrymple B.P."/>
            <person name="de Bono B."/>
            <person name="Della Gatta G."/>
            <person name="di Bernardo D."/>
            <person name="Down T."/>
            <person name="Engstrom P."/>
            <person name="Fagiolini M."/>
            <person name="Faulkner G."/>
            <person name="Fletcher C.F."/>
            <person name="Fukushima T."/>
            <person name="Furuno M."/>
            <person name="Futaki S."/>
            <person name="Gariboldi M."/>
            <person name="Georgii-Hemming P."/>
            <person name="Gingeras T.R."/>
            <person name="Gojobori T."/>
            <person name="Green R.E."/>
            <person name="Gustincich S."/>
            <person name="Harbers M."/>
            <person name="Hayashi Y."/>
            <person name="Hensch T.K."/>
            <person name="Hirokawa N."/>
            <person name="Hill D."/>
            <person name="Huminiecki L."/>
            <person name="Iacono M."/>
            <person name="Ikeo K."/>
            <person name="Iwama A."/>
            <person name="Ishikawa T."/>
            <person name="Jakt M."/>
            <person name="Kanapin A."/>
            <person name="Katoh M."/>
            <person name="Kawasawa Y."/>
            <person name="Kelso J."/>
            <person name="Kitamura H."/>
            <person name="Kitano H."/>
            <person name="Kollias G."/>
            <person name="Krishnan S.P."/>
            <person name="Kruger A."/>
            <person name="Kummerfeld S.K."/>
            <person name="Kurochkin I.V."/>
            <person name="Lareau L.F."/>
            <person name="Lazarevic D."/>
            <person name="Lipovich L."/>
            <person name="Liu J."/>
            <person name="Liuni S."/>
            <person name="McWilliam S."/>
            <person name="Madan Babu M."/>
            <person name="Madera M."/>
            <person name="Marchionni L."/>
            <person name="Matsuda H."/>
            <person name="Matsuzawa S."/>
            <person name="Miki H."/>
            <person name="Mignone F."/>
            <person name="Miyake S."/>
            <person name="Morris K."/>
            <person name="Mottagui-Tabar S."/>
            <person name="Mulder N."/>
            <person name="Nakano N."/>
            <person name="Nakauchi H."/>
            <person name="Ng P."/>
            <person name="Nilsson R."/>
            <person name="Nishiguchi S."/>
            <person name="Nishikawa S."/>
            <person name="Nori F."/>
            <person name="Ohara O."/>
            <person name="Okazaki Y."/>
            <person name="Orlando V."/>
            <person name="Pang K.C."/>
            <person name="Pavan W.J."/>
            <person name="Pavesi G."/>
            <person name="Pesole G."/>
            <person name="Petrovsky N."/>
            <person name="Piazza S."/>
            <person name="Reed J."/>
            <person name="Reid J.F."/>
            <person name="Ring B.Z."/>
            <person name="Ringwald M."/>
            <person name="Rost B."/>
            <person name="Ruan Y."/>
            <person name="Salzberg S.L."/>
            <person name="Sandelin A."/>
            <person name="Schneider C."/>
            <person name="Schoenbach C."/>
            <person name="Sekiguchi K."/>
            <person name="Semple C.A."/>
            <person name="Seno S."/>
            <person name="Sessa L."/>
            <person name="Sheng Y."/>
            <person name="Shibata Y."/>
            <person name="Shimada H."/>
            <person name="Shimada K."/>
            <person name="Silva D."/>
            <person name="Sinclair B."/>
            <person name="Sperling S."/>
            <person name="Stupka E."/>
            <person name="Sugiura K."/>
            <person name="Sultana R."/>
            <person name="Takenaka Y."/>
            <person name="Taki K."/>
            <person name="Tammoja K."/>
            <person name="Tan S.L."/>
            <person name="Tang S."/>
            <person name="Taylor M.S."/>
            <person name="Tegner J."/>
            <person name="Teichmann S.A."/>
            <person name="Ueda H.R."/>
            <person name="van Nimwegen E."/>
            <person name="Verardo R."/>
            <person name="Wei C.L."/>
            <person name="Yagi K."/>
            <person name="Yamanishi H."/>
            <person name="Zabarovsky E."/>
            <person name="Zhu S."/>
            <person name="Zimmer A."/>
            <person name="Hide W."/>
            <person name="Bult C."/>
            <person name="Grimmond S.M."/>
            <person name="Teasdale R.D."/>
            <person name="Liu E.T."/>
            <person name="Brusic V."/>
            <person name="Quackenbush J."/>
            <person name="Wahlestedt C."/>
            <person name="Mattick J.S."/>
            <person name="Hume D.A."/>
            <person name="Kai C."/>
            <person name="Sasaki D."/>
            <person name="Tomaru Y."/>
            <person name="Fukuda S."/>
            <person name="Kanamori-Katayama M."/>
            <person name="Suzuki M."/>
            <person name="Aoki J."/>
            <person name="Arakawa T."/>
            <person name="Iida J."/>
            <person name="Imamura K."/>
            <person name="Itoh M."/>
            <person name="Kato T."/>
            <person name="Kawaji H."/>
            <person name="Kawagashira N."/>
            <person name="Kawashima T."/>
            <person name="Kojima M."/>
            <person name="Kondo S."/>
            <person name="Konno H."/>
            <person name="Nakano K."/>
            <person name="Ninomiya N."/>
            <person name="Nishio T."/>
            <person name="Okada M."/>
            <person name="Plessy C."/>
            <person name="Shibata K."/>
            <person name="Shiraki T."/>
            <person name="Suzuki S."/>
            <person name="Tagami M."/>
            <person name="Waki K."/>
            <person name="Watahiki A."/>
            <person name="Okamura-Oho Y."/>
            <person name="Suzuki H."/>
            <person name="Kawai J."/>
            <person name="Hayashizaki Y."/>
        </authorList>
    </citation>
    <scope>NUCLEOTIDE SEQUENCE [LARGE SCALE MRNA]</scope>
    <source>
        <strain>C57BL/6J</strain>
    </source>
</reference>
<reference evidence="7" key="4">
    <citation type="submission" date="2005-09" db="EMBL/GenBank/DDBJ databases">
        <authorList>
            <person name="Mural R.J."/>
            <person name="Adams M.D."/>
            <person name="Myers E.W."/>
            <person name="Smith H.O."/>
            <person name="Venter J.C."/>
        </authorList>
    </citation>
    <scope>NUCLEOTIDE SEQUENCE [LARGE SCALE GENOMIC DNA]</scope>
</reference>
<accession>Q80WM5</accession>
<accession>Q3UVT2</accession>
<accession>Q80XX3</accession>
<keyword id="KW-1015">Disulfide bond</keyword>
<keyword id="KW-0272">Extracellular matrix</keyword>
<keyword id="KW-0373">Hyaluronic acid</keyword>
<keyword id="KW-0393">Immunoglobulin domain</keyword>
<keyword id="KW-1185">Reference proteome</keyword>
<keyword id="KW-0677">Repeat</keyword>
<keyword id="KW-0964">Secreted</keyword>
<keyword id="KW-0732">Signal</keyword>